<proteinExistence type="evidence at protein level"/>
<feature type="signal peptide" evidence="4">
    <location>
        <begin position="1"/>
        <end position="20"/>
    </location>
</feature>
<feature type="chain" id="PRO_0000001037" description="Anterior gradient protein 2 homolog">
    <location>
        <begin position="21"/>
        <end position="175"/>
    </location>
</feature>
<feature type="region of interest" description="Required to promote cell adhesion" evidence="8">
    <location>
        <begin position="21"/>
        <end position="40"/>
    </location>
</feature>
<feature type="short sequence motif" description="Homodimer stabilization; interchain" evidence="8 13">
    <location>
        <begin position="45"/>
        <end position="54"/>
    </location>
</feature>
<feature type="short sequence motif" description="Homodimer stabilization; interchain" evidence="8 13">
    <location>
        <begin position="60"/>
        <end position="67"/>
    </location>
</feature>
<feature type="sequence variant" id="VAR_088087" description="In RIFTD; uncertain significance." evidence="10">
    <original>P</original>
    <variation>T</variation>
    <location>
        <position position="71"/>
    </location>
</feature>
<feature type="sequence variant" id="VAR_088088" description="In RIFTD; decreased interaction with MUC2; dbSNP:rs780638101." evidence="9 10">
    <original>H</original>
    <variation>Y</variation>
    <location>
        <position position="117"/>
    </location>
</feature>
<feature type="sequence variant" id="VAR_088089" description="In RIFTD; uncertain significance; dbSNP:rs923936131." evidence="10">
    <original>G</original>
    <variation>E</variation>
    <location>
        <position position="143"/>
    </location>
</feature>
<feature type="mutagenesis site" description="Monomer only, and reduced cell adhesion efficiency." evidence="8">
    <original>E</original>
    <variation>A</variation>
    <location>
        <position position="60"/>
    </location>
</feature>
<feature type="mutagenesis site" description="Disrupted dimerization." evidence="8">
    <original>Y</original>
    <variation>A</variation>
    <location>
        <position position="63"/>
    </location>
</feature>
<feature type="mutagenesis site" description="Disrupted dimerization." evidence="8">
    <original>K</original>
    <variation>A</variation>
    <location>
        <position position="64"/>
    </location>
</feature>
<feature type="mutagenesis site" description="Loss of interaction with MUC2." evidence="7">
    <original>C</original>
    <variation>S</variation>
    <location>
        <position position="81"/>
    </location>
</feature>
<feature type="strand" evidence="14">
    <location>
        <begin position="48"/>
        <end position="51"/>
    </location>
</feature>
<feature type="helix" evidence="14">
    <location>
        <begin position="58"/>
        <end position="66"/>
    </location>
</feature>
<feature type="turn" evidence="14">
    <location>
        <begin position="67"/>
        <end position="69"/>
    </location>
</feature>
<feature type="strand" evidence="14">
    <location>
        <begin position="72"/>
        <end position="77"/>
    </location>
</feature>
<feature type="strand" evidence="14">
    <location>
        <begin position="79"/>
        <end position="81"/>
    </location>
</feature>
<feature type="helix" evidence="14">
    <location>
        <begin position="82"/>
        <end position="91"/>
    </location>
</feature>
<feature type="helix" evidence="14">
    <location>
        <begin position="95"/>
        <end position="102"/>
    </location>
</feature>
<feature type="strand" evidence="14">
    <location>
        <begin position="103"/>
        <end position="105"/>
    </location>
</feature>
<feature type="strand" evidence="15">
    <location>
        <begin position="109"/>
        <end position="111"/>
    </location>
</feature>
<feature type="turn" evidence="14">
    <location>
        <begin position="116"/>
        <end position="118"/>
    </location>
</feature>
<feature type="strand" evidence="14">
    <location>
        <begin position="127"/>
        <end position="132"/>
    </location>
</feature>
<feature type="turn" evidence="14">
    <location>
        <begin position="133"/>
        <end position="135"/>
    </location>
</feature>
<feature type="turn" evidence="14">
    <location>
        <begin position="146"/>
        <end position="150"/>
    </location>
</feature>
<feature type="turn" evidence="14">
    <location>
        <begin position="154"/>
        <end position="156"/>
    </location>
</feature>
<feature type="helix" evidence="14">
    <location>
        <begin position="157"/>
        <end position="167"/>
    </location>
</feature>
<feature type="strand" evidence="15">
    <location>
        <begin position="171"/>
        <end position="173"/>
    </location>
</feature>
<evidence type="ECO:0000250" key="1"/>
<evidence type="ECO:0000250" key="2">
    <source>
        <dbReference type="UniProtKB" id="O88312"/>
    </source>
</evidence>
<evidence type="ECO:0000269" key="3">
    <source>
    </source>
</evidence>
<evidence type="ECO:0000269" key="4">
    <source>
    </source>
</evidence>
<evidence type="ECO:0000269" key="5">
    <source>
    </source>
</evidence>
<evidence type="ECO:0000269" key="6">
    <source>
    </source>
</evidence>
<evidence type="ECO:0000269" key="7">
    <source>
    </source>
</evidence>
<evidence type="ECO:0000269" key="8">
    <source>
    </source>
</evidence>
<evidence type="ECO:0000269" key="9">
    <source>
    </source>
</evidence>
<evidence type="ECO:0000269" key="10">
    <source>
    </source>
</evidence>
<evidence type="ECO:0000269" key="11">
    <source>
    </source>
</evidence>
<evidence type="ECO:0000305" key="12"/>
<evidence type="ECO:0007744" key="13">
    <source>
        <dbReference type="PDB" id="2LNS"/>
    </source>
</evidence>
<evidence type="ECO:0007829" key="14">
    <source>
        <dbReference type="PDB" id="2LNS"/>
    </source>
</evidence>
<evidence type="ECO:0007829" key="15">
    <source>
        <dbReference type="PDB" id="2LNT"/>
    </source>
</evidence>
<name>AGR2_HUMAN</name>
<comment type="function">
    <text evidence="1 6 8">Required for MUC2 post-transcriptional synthesis and secretion. May play a role in the production of mucus by intestinal cells (By similarity). Proto-oncogene that may play a role in cell migration, cell differentiation and cell growth. Promotes cell adhesion (PubMed:23274113).</text>
</comment>
<comment type="subunit">
    <text evidence="3 7 8 9">Monomer and homodimer (PubMed:23274113). Interacts with LYPD3 and DAG1 (alphaDAG1) (PubMed:12592373). Interacts with MUC2; disulfide-linked (PubMed:19359471, PubMed:34237462).</text>
</comment>
<comment type="interaction">
    <interactant intactId="EBI-712648">
        <id>O95994</id>
    </interactant>
    <interactant intactId="EBI-17183751">
        <id>X5D778</id>
        <label>ANKRD11</label>
    </interactant>
    <organismsDiffer>false</organismsDiffer>
    <experiments>3</experiments>
</comment>
<comment type="interaction">
    <interactant intactId="EBI-712648">
        <id>O95994</id>
    </interactant>
    <interactant intactId="EBI-17624977">
        <id>Q9UH17-2</id>
        <label>APOBEC3B</label>
    </interactant>
    <organismsDiffer>false</organismsDiffer>
    <experiments>3</experiments>
</comment>
<comment type="interaction">
    <interactant intactId="EBI-712648">
        <id>O95994</id>
    </interactant>
    <interactant intactId="EBI-12092171">
        <id>Q12797-6</id>
        <label>ASPH</label>
    </interactant>
    <organismsDiffer>false</organismsDiffer>
    <experiments>3</experiments>
</comment>
<comment type="interaction">
    <interactant intactId="EBI-712648">
        <id>O95994</id>
    </interactant>
    <interactant intactId="EBI-744076">
        <id>Q96FH0</id>
        <label>BORCS8</label>
    </interactant>
    <organismsDiffer>false</organismsDiffer>
    <experiments>3</experiments>
</comment>
<comment type="interaction">
    <interactant intactId="EBI-712648">
        <id>O95994</id>
    </interactant>
    <interactant intactId="EBI-905851">
        <id>P01024</id>
        <label>C3</label>
    </interactant>
    <organismsDiffer>false</organismsDiffer>
    <experiments>3</experiments>
</comment>
<comment type="interaction">
    <interactant intactId="EBI-712648">
        <id>O95994</id>
    </interactant>
    <interactant intactId="EBI-1748958">
        <id>P49069</id>
        <label>CAMLG</label>
    </interactant>
    <organismsDiffer>false</organismsDiffer>
    <experiments>3</experiments>
</comment>
<comment type="interaction">
    <interactant intactId="EBI-712648">
        <id>O95994</id>
    </interactant>
    <interactant intactId="EBI-744545">
        <id>Q8NEC5</id>
        <label>CATSPER1</label>
    </interactant>
    <organismsDiffer>false</organismsDiffer>
    <experiments>6</experiments>
</comment>
<comment type="interaction">
    <interactant intactId="EBI-712648">
        <id>O95994</id>
    </interactant>
    <interactant intactId="EBI-2836676">
        <id>P28906</id>
        <label>CD34</label>
    </interactant>
    <organismsDiffer>false</organismsDiffer>
    <experiments>3</experiments>
</comment>
<comment type="interaction">
    <interactant intactId="EBI-712648">
        <id>O95994</id>
    </interactant>
    <interactant intactId="EBI-2826276">
        <id>P34810</id>
        <label>CD68</label>
    </interactant>
    <organismsDiffer>false</organismsDiffer>
    <experiments>3</experiments>
</comment>
<comment type="interaction">
    <interactant intactId="EBI-712648">
        <id>O95994</id>
    </interactant>
    <interactant intactId="EBI-10038935">
        <id>Q96HQ2</id>
        <label>CDKN2AIPNL</label>
    </interactant>
    <organismsDiffer>false</organismsDiffer>
    <experiments>3</experiments>
</comment>
<comment type="interaction">
    <interactant intactId="EBI-712648">
        <id>O95994</id>
    </interactant>
    <interactant intactId="EBI-712959">
        <id>O15182</id>
        <label>CETN3</label>
    </interactant>
    <organismsDiffer>false</organismsDiffer>
    <experiments>3</experiments>
</comment>
<comment type="interaction">
    <interactant intactId="EBI-712648">
        <id>O95994</id>
    </interactant>
    <interactant intactId="EBI-10192241">
        <id>O95833</id>
        <label>CLIC3</label>
    </interactant>
    <organismsDiffer>false</organismsDiffer>
    <experiments>3</experiments>
</comment>
<comment type="interaction">
    <interactant intactId="EBI-712648">
        <id>O95994</id>
    </interactant>
    <interactant intactId="EBI-741032">
        <id>Q8NE01</id>
        <label>CNNM3</label>
    </interactant>
    <organismsDiffer>false</organismsDiffer>
    <experiments>3</experiments>
</comment>
<comment type="interaction">
    <interactant intactId="EBI-712648">
        <id>O95994</id>
    </interactant>
    <interactant intactId="EBI-13312079">
        <id>O95741-2</id>
        <label>CPNE6</label>
    </interactant>
    <organismsDiffer>false</organismsDiffer>
    <experiments>5</experiments>
</comment>
<comment type="interaction">
    <interactant intactId="EBI-712648">
        <id>O95994</id>
    </interactant>
    <interactant intactId="EBI-12880830">
        <id>O75575-2</id>
        <label>CRCP</label>
    </interactant>
    <organismsDiffer>false</organismsDiffer>
    <experiments>3</experiments>
</comment>
<comment type="interaction">
    <interactant intactId="EBI-712648">
        <id>O95994</id>
    </interactant>
    <interactant intactId="EBI-711855">
        <id>P16220</id>
        <label>CREB1</label>
    </interactant>
    <organismsDiffer>false</organismsDiffer>
    <experiments>3</experiments>
</comment>
<comment type="interaction">
    <interactant intactId="EBI-712648">
        <id>O95994</id>
    </interactant>
    <interactant intactId="EBI-10239205">
        <id>Q24JT5</id>
        <label>CRYGA</label>
    </interactant>
    <organismsDiffer>false</organismsDiffer>
    <experiments>3</experiments>
</comment>
<comment type="interaction">
    <interactant intactId="EBI-712648">
        <id>O95994</id>
    </interactant>
    <interactant intactId="EBI-12102608">
        <id>Q6BCY4-2</id>
        <label>CYB5R2</label>
    </interactant>
    <organismsDiffer>false</organismsDiffer>
    <experiments>3</experiments>
</comment>
<comment type="interaction">
    <interactant intactId="EBI-712648">
        <id>O95994</id>
    </interactant>
    <interactant intactId="EBI-2213388">
        <id>Q8TEB1</id>
        <label>DCAF11</label>
    </interactant>
    <organismsDiffer>false</organismsDiffer>
    <experiments>3</experiments>
</comment>
<comment type="interaction">
    <interactant intactId="EBI-712648">
        <id>O95994</id>
    </interactant>
    <interactant intactId="EBI-711990">
        <id>O00303</id>
        <label>EIF3F</label>
    </interactant>
    <organismsDiffer>false</organismsDiffer>
    <experiments>3</experiments>
</comment>
<comment type="interaction">
    <interactant intactId="EBI-712648">
        <id>O95994</id>
    </interactant>
    <interactant intactId="EBI-10182490">
        <id>O15197-2</id>
        <label>EPHB6</label>
    </interactant>
    <organismsDiffer>false</organismsDiffer>
    <experiments>3</experiments>
</comment>
<comment type="interaction">
    <interactant intactId="EBI-712648">
        <id>O95994</id>
    </interactant>
    <interactant intactId="EBI-3905109">
        <id>P12104</id>
        <label>FABP2</label>
    </interactant>
    <organismsDiffer>false</organismsDiffer>
    <experiments>4</experiments>
</comment>
<comment type="interaction">
    <interactant intactId="EBI-712648">
        <id>O95994</id>
    </interactant>
    <interactant intactId="EBI-1752811">
        <id>Q9BQ89</id>
        <label>FAM110A</label>
    </interactant>
    <organismsDiffer>false</organismsDiffer>
    <experiments>5</experiments>
</comment>
<comment type="interaction">
    <interactant intactId="EBI-712648">
        <id>O95994</id>
    </interactant>
    <interactant intactId="EBI-3893327">
        <id>Q6P1L5</id>
        <label>FAM117B</label>
    </interactant>
    <organismsDiffer>false</organismsDiffer>
    <experiments>3</experiments>
</comment>
<comment type="interaction">
    <interactant intactId="EBI-712648">
        <id>O95994</id>
    </interactant>
    <interactant intactId="EBI-10192648">
        <id>O95954</id>
        <label>FTCD</label>
    </interactant>
    <organismsDiffer>false</organismsDiffer>
    <experiments>3</experiments>
</comment>
<comment type="interaction">
    <interactant intactId="EBI-712648">
        <id>O95994</id>
    </interactant>
    <interactant intactId="EBI-618165">
        <id>Q06547</id>
        <label>GABPB1</label>
    </interactant>
    <organismsDiffer>false</organismsDiffer>
    <experiments>3</experiments>
</comment>
<comment type="interaction">
    <interactant intactId="EBI-712648">
        <id>O95994</id>
    </interactant>
    <interactant intactId="EBI-2515857">
        <id>O43681</id>
        <label>GET3</label>
    </interactant>
    <organismsDiffer>false</organismsDiffer>
    <experiments>7</experiments>
</comment>
<comment type="interaction">
    <interactant intactId="EBI-712648">
        <id>O95994</id>
    </interactant>
    <interactant intactId="EBI-401755">
        <id>P62993</id>
        <label>GRB2</label>
    </interactant>
    <organismsDiffer>false</organismsDiffer>
    <experiments>5</experiments>
</comment>
<comment type="interaction">
    <interactant intactId="EBI-712648">
        <id>O95994</id>
    </interactant>
    <interactant intactId="EBI-6380438">
        <id>Q6ZYL4</id>
        <label>GTF2H5</label>
    </interactant>
    <organismsDiffer>false</organismsDiffer>
    <experiments>3</experiments>
</comment>
<comment type="interaction">
    <interactant intactId="EBI-712648">
        <id>O95994</id>
    </interactant>
    <interactant intactId="EBI-740290">
        <id>Q969Y2</id>
        <label>GTPBP3</label>
    </interactant>
    <organismsDiffer>false</organismsDiffer>
    <experiments>3</experiments>
</comment>
<comment type="interaction">
    <interactant intactId="EBI-712648">
        <id>O95994</id>
    </interactant>
    <interactant intactId="EBI-6873005">
        <id>P43080</id>
        <label>GUCA1A</label>
    </interactant>
    <organismsDiffer>false</organismsDiffer>
    <experiments>3</experiments>
</comment>
<comment type="interaction">
    <interactant intactId="EBI-712648">
        <id>O95994</id>
    </interactant>
    <interactant intactId="EBI-9834454">
        <id>P08631-2</id>
        <label>HCK</label>
    </interactant>
    <organismsDiffer>false</organismsDiffer>
    <experiments>3</experiments>
</comment>
<comment type="interaction">
    <interactant intactId="EBI-712648">
        <id>O95994</id>
    </interactant>
    <interactant intactId="EBI-740641">
        <id>Q9NP66</id>
        <label>HMG20A</label>
    </interactant>
    <organismsDiffer>false</organismsDiffer>
    <experiments>3</experiments>
</comment>
<comment type="interaction">
    <interactant intactId="EBI-712648">
        <id>O95994</id>
    </interactant>
    <interactant intactId="EBI-3918847">
        <id>Q9H2F3</id>
        <label>HSD3B7</label>
    </interactant>
    <organismsDiffer>false</organismsDiffer>
    <experiments>3</experiments>
</comment>
<comment type="interaction">
    <interactant intactId="EBI-712648">
        <id>O95994</id>
    </interactant>
    <interactant intactId="EBI-465156">
        <id>Q9UBH0</id>
        <label>IL36RN</label>
    </interactant>
    <organismsDiffer>false</organismsDiffer>
    <experiments>3</experiments>
</comment>
<comment type="interaction">
    <interactant intactId="EBI-712648">
        <id>O95994</id>
    </interactant>
    <interactant intactId="EBI-353389">
        <id>P12268</id>
        <label>IMPDH2</label>
    </interactant>
    <organismsDiffer>false</organismsDiffer>
    <experiments>3</experiments>
</comment>
<comment type="interaction">
    <interactant intactId="EBI-712648">
        <id>O95994</id>
    </interactant>
    <interactant intactId="EBI-6426443">
        <id>Q2WGJ6</id>
        <label>KLHL38</label>
    </interactant>
    <organismsDiffer>false</organismsDiffer>
    <experiments>3</experiments>
</comment>
<comment type="interaction">
    <interactant intactId="EBI-712648">
        <id>O95994</id>
    </interactant>
    <interactant intactId="EBI-948001">
        <id>Q15323</id>
        <label>KRT31</label>
    </interactant>
    <organismsDiffer>false</organismsDiffer>
    <experiments>6</experiments>
</comment>
<comment type="interaction">
    <interactant intactId="EBI-712648">
        <id>O95994</id>
    </interactant>
    <interactant intactId="EBI-10274069">
        <id>Q8TCE9</id>
        <label>LGALS14</label>
    </interactant>
    <organismsDiffer>false</organismsDiffer>
    <experiments>3</experiments>
</comment>
<comment type="interaction">
    <interactant intactId="EBI-712648">
        <id>O95994</id>
    </interactant>
    <interactant intactId="EBI-347619">
        <id>O15116</id>
        <label>LSM1</label>
    </interactant>
    <organismsDiffer>false</organismsDiffer>
    <experiments>3</experiments>
</comment>
<comment type="interaction">
    <interactant intactId="EBI-712648">
        <id>O95994</id>
    </interactant>
    <interactant intactId="EBI-11978579">
        <id>O95983-2</id>
        <label>MBD3</label>
    </interactant>
    <organismsDiffer>false</organismsDiffer>
    <experiments>3</experiments>
</comment>
<comment type="interaction">
    <interactant intactId="EBI-712648">
        <id>O95994</id>
    </interactant>
    <interactant intactId="EBI-2105803">
        <id>Q02817</id>
        <label>MUC2</label>
    </interactant>
    <organismsDiffer>false</organismsDiffer>
    <experiments>3</experiments>
</comment>
<comment type="interaction">
    <interactant intactId="EBI-712648">
        <id>O95994</id>
    </interactant>
    <interactant intactId="EBI-300817">
        <id>P60660</id>
        <label>MYL6</label>
    </interactant>
    <organismsDiffer>false</organismsDiffer>
    <experiments>3</experiments>
</comment>
<comment type="interaction">
    <interactant intactId="EBI-712648">
        <id>O95994</id>
    </interactant>
    <interactant intactId="EBI-11742836">
        <id>Q16656-4</id>
        <label>NRF1</label>
    </interactant>
    <organismsDiffer>false</organismsDiffer>
    <experiments>5</experiments>
</comment>
<comment type="interaction">
    <interactant intactId="EBI-712648">
        <id>O95994</id>
    </interactant>
    <interactant intactId="EBI-11110981">
        <id>Q96L73-2</id>
        <label>NSD1</label>
    </interactant>
    <organismsDiffer>false</organismsDiffer>
    <experiments>3</experiments>
</comment>
<comment type="interaction">
    <interactant intactId="EBI-712648">
        <id>O95994</id>
    </interactant>
    <interactant intactId="EBI-741158">
        <id>Q96HA8</id>
        <label>NTAQ1</label>
    </interactant>
    <organismsDiffer>false</organismsDiffer>
    <experiments>3</experiments>
</comment>
<comment type="interaction">
    <interactant intactId="EBI-712648">
        <id>O95994</id>
    </interactant>
    <interactant intactId="EBI-741048">
        <id>Q7Z3B4</id>
        <label>NUP54</label>
    </interactant>
    <organismsDiffer>false</organismsDiffer>
    <experiments>3</experiments>
</comment>
<comment type="interaction">
    <interactant intactId="EBI-712648">
        <id>O95994</id>
    </interactant>
    <interactant intactId="EBI-2811583">
        <id>Q9BVL2</id>
        <label>NUP58</label>
    </interactant>
    <organismsDiffer>false</organismsDiffer>
    <experiments>5</experiments>
</comment>
<comment type="interaction">
    <interactant intactId="EBI-712648">
        <id>O95994</id>
    </interactant>
    <interactant intactId="EBI-751933">
        <id>Q9H1M0</id>
        <label>NUP62CL</label>
    </interactant>
    <organismsDiffer>false</organismsDiffer>
    <experiments>6</experiments>
</comment>
<comment type="interaction">
    <interactant intactId="EBI-712648">
        <id>O95994</id>
    </interactant>
    <interactant intactId="EBI-12910528">
        <id>Q8NDX5-7</id>
        <label>PHC3</label>
    </interactant>
    <organismsDiffer>false</organismsDiffer>
    <experiments>5</experiments>
</comment>
<comment type="interaction">
    <interactant intactId="EBI-712648">
        <id>O95994</id>
    </interactant>
    <interactant intactId="EBI-1389308">
        <id>Q7Z3K3</id>
        <label>POGZ</label>
    </interactant>
    <organismsDiffer>false</organismsDiffer>
    <experiments>3</experiments>
</comment>
<comment type="interaction">
    <interactant intactId="EBI-712648">
        <id>O95994</id>
    </interactant>
    <interactant intactId="EBI-359527">
        <id>P62875</id>
        <label>POLR2L</label>
    </interactant>
    <organismsDiffer>false</organismsDiffer>
    <experiments>3</experiments>
</comment>
<comment type="interaction">
    <interactant intactId="EBI-712648">
        <id>O95994</id>
    </interactant>
    <interactant intactId="EBI-739990">
        <id>Q96HA1</id>
        <label>POM121</label>
    </interactant>
    <organismsDiffer>false</organismsDiffer>
    <experiments>4</experiments>
</comment>
<comment type="interaction">
    <interactant intactId="EBI-712648">
        <id>O95994</id>
    </interactant>
    <interactant intactId="EBI-11956563">
        <id>Q96HA1-2</id>
        <label>POM121</label>
    </interactant>
    <organismsDiffer>false</organismsDiffer>
    <experiments>3</experiments>
</comment>
<comment type="interaction">
    <interactant intactId="EBI-712648">
        <id>O95994</id>
    </interactant>
    <interactant intactId="EBI-12029004">
        <id>P78424</id>
        <label>POU6F2</label>
    </interactant>
    <organismsDiffer>false</organismsDiffer>
    <experiments>3</experiments>
</comment>
<comment type="interaction">
    <interactant intactId="EBI-712648">
        <id>O95994</id>
    </interactant>
    <interactant intactId="EBI-2798416">
        <id>Q99633</id>
        <label>PRPF18</label>
    </interactant>
    <organismsDiffer>false</organismsDiffer>
    <experiments>3</experiments>
</comment>
<comment type="interaction">
    <interactant intactId="EBI-712648">
        <id>O95994</id>
    </interactant>
    <interactant intactId="EBI-359352">
        <id>P25786</id>
        <label>PSMA1</label>
    </interactant>
    <organismsDiffer>false</organismsDiffer>
    <experiments>3</experiments>
</comment>
<comment type="interaction">
    <interactant intactId="EBI-712648">
        <id>O95994</id>
    </interactant>
    <interactant intactId="EBI-372273">
        <id>P20618</id>
        <label>PSMB1</label>
    </interactant>
    <organismsDiffer>false</organismsDiffer>
    <experiments>3</experiments>
</comment>
<comment type="interaction">
    <interactant intactId="EBI-712648">
        <id>O95994</id>
    </interactant>
    <interactant intactId="EBI-11974061">
        <id>Q9UIG4</id>
        <label>PSORS1C2</label>
    </interactant>
    <organismsDiffer>false</organismsDiffer>
    <experiments>3</experiments>
</comment>
<comment type="interaction">
    <interactant intactId="EBI-712648">
        <id>O95994</id>
    </interactant>
    <interactant intactId="EBI-17630019">
        <id>Q9NZH5-2</id>
        <label>PTTG2</label>
    </interactant>
    <organismsDiffer>false</organismsDiffer>
    <experiments>3</experiments>
</comment>
<comment type="interaction">
    <interactant intactId="EBI-712648">
        <id>O95994</id>
    </interactant>
    <interactant intactId="EBI-12123390">
        <id>Q9NWB1-5</id>
        <label>RBFOX1</label>
    </interactant>
    <organismsDiffer>false</organismsDiffer>
    <experiments>3</experiments>
</comment>
<comment type="interaction">
    <interactant intactId="EBI-712648">
        <id>O95994</id>
    </interactant>
    <interactant intactId="EBI-3941274">
        <id>P82980</id>
        <label>RBP5</label>
    </interactant>
    <organismsDiffer>false</organismsDiffer>
    <experiments>3</experiments>
</comment>
<comment type="interaction">
    <interactant intactId="EBI-712648">
        <id>O95994</id>
    </interactant>
    <interactant intactId="EBI-18292412">
        <id>Q6ZR62</id>
        <label>RTL4</label>
    </interactant>
    <organismsDiffer>false</organismsDiffer>
    <experiments>3</experiments>
</comment>
<comment type="interaction">
    <interactant intactId="EBI-712648">
        <id>O95994</id>
    </interactant>
    <interactant intactId="EBI-10204280">
        <id>A0A0S2Z4U3</id>
        <label>SDC3</label>
    </interactant>
    <organismsDiffer>false</organismsDiffer>
    <experiments>3</experiments>
</comment>
<comment type="interaction">
    <interactant intactId="EBI-712648">
        <id>O95994</id>
    </interactant>
    <interactant intactId="EBI-347996">
        <id>O43765</id>
        <label>SGTA</label>
    </interactant>
    <organismsDiffer>false</organismsDiffer>
    <experiments>3</experiments>
</comment>
<comment type="interaction">
    <interactant intactId="EBI-712648">
        <id>O95994</id>
    </interactant>
    <interactant intactId="EBI-744081">
        <id>Q96EQ0</id>
        <label>SGTB</label>
    </interactant>
    <organismsDiffer>false</organismsDiffer>
    <experiments>6</experiments>
</comment>
<comment type="interaction">
    <interactant intactId="EBI-712648">
        <id>O95994</id>
    </interactant>
    <interactant intactId="EBI-3923013">
        <id>O14796</id>
        <label>SH2D1B</label>
    </interactant>
    <organismsDiffer>false</organismsDiffer>
    <experiments>3</experiments>
</comment>
<comment type="interaction">
    <interactant intactId="EBI-712648">
        <id>O95994</id>
    </interactant>
    <interactant intactId="EBI-2623095">
        <id>Q9Y371</id>
        <label>SH3GLB1</label>
    </interactant>
    <organismsDiffer>false</organismsDiffer>
    <experiments>3</experiments>
</comment>
<comment type="interaction">
    <interactant intactId="EBI-712648">
        <id>O95994</id>
    </interactant>
    <interactant intactId="EBI-749295">
        <id>O75716</id>
        <label>STK16</label>
    </interactant>
    <organismsDiffer>false</organismsDiffer>
    <experiments>3</experiments>
</comment>
<comment type="interaction">
    <interactant intactId="EBI-712648">
        <id>O95994</id>
    </interactant>
    <interactant intactId="EBI-710310">
        <id>Q15560</id>
        <label>TCEA2</label>
    </interactant>
    <organismsDiffer>false</organismsDiffer>
    <experiments>3</experiments>
</comment>
<comment type="interaction">
    <interactant intactId="EBI-712648">
        <id>O95994</id>
    </interactant>
    <interactant intactId="EBI-11952651">
        <id>Q7Z6R9</id>
        <label>TFAP2D</label>
    </interactant>
    <organismsDiffer>false</organismsDiffer>
    <experiments>3</experiments>
</comment>
<comment type="interaction">
    <interactant intactId="EBI-712648">
        <id>O95994</id>
    </interactant>
    <interactant intactId="EBI-1765605">
        <id>Q96FV9</id>
        <label>THOC1</label>
    </interactant>
    <organismsDiffer>false</organismsDiffer>
    <experiments>3</experiments>
</comment>
<comment type="interaction">
    <interactant intactId="EBI-712648">
        <id>O95994</id>
    </interactant>
    <interactant intactId="EBI-11741437">
        <id>Q08117-2</id>
        <label>TLE5</label>
    </interactant>
    <organismsDiffer>false</organismsDiffer>
    <experiments>3</experiments>
</comment>
<comment type="interaction">
    <interactant intactId="EBI-712648">
        <id>O95994</id>
    </interactant>
    <interactant intactId="EBI-355744">
        <id>Q12933</id>
        <label>TRAF2</label>
    </interactant>
    <organismsDiffer>false</organismsDiffer>
    <experiments>3</experiments>
</comment>
<comment type="interaction">
    <interactant intactId="EBI-712648">
        <id>O95994</id>
    </interactant>
    <interactant intactId="EBI-8994397">
        <id>Q5T7W7</id>
        <label>TSTD2</label>
    </interactant>
    <organismsDiffer>false</organismsDiffer>
    <experiments>3</experiments>
</comment>
<comment type="interaction">
    <interactant intactId="EBI-712648">
        <id>O95994</id>
    </interactant>
    <interactant intactId="EBI-1383454">
        <id>P29597</id>
        <label>TYK2</label>
    </interactant>
    <organismsDiffer>false</organismsDiffer>
    <experiments>5</experiments>
</comment>
<comment type="interaction">
    <interactant intactId="EBI-712648">
        <id>O95994</id>
    </interactant>
    <interactant intactId="EBI-10180829">
        <id>Q7KZS0</id>
        <label>UBE2I</label>
    </interactant>
    <organismsDiffer>false</organismsDiffer>
    <experiments>3</experiments>
</comment>
<comment type="interaction">
    <interactant intactId="EBI-712648">
        <id>O95994</id>
    </interactant>
    <interactant intactId="EBI-741480">
        <id>Q9UMX0</id>
        <label>UBQLN1</label>
    </interactant>
    <organismsDiffer>false</organismsDiffer>
    <experiments>9</experiments>
</comment>
<comment type="interaction">
    <interactant intactId="EBI-712648">
        <id>O95994</id>
    </interactant>
    <interactant intactId="EBI-10173939">
        <id>Q9UMX0-2</id>
        <label>UBQLN1</label>
    </interactant>
    <organismsDiffer>false</organismsDiffer>
    <experiments>3</experiments>
</comment>
<comment type="interaction">
    <interactant intactId="EBI-712648">
        <id>O95994</id>
    </interactant>
    <interactant intactId="EBI-947187">
        <id>Q9UHD9</id>
        <label>UBQLN2</label>
    </interactant>
    <organismsDiffer>false</organismsDiffer>
    <experiments>5</experiments>
</comment>
<comment type="interaction">
    <interactant intactId="EBI-712648">
        <id>O95994</id>
    </interactant>
    <interactant intactId="EBI-2511991">
        <id>Q9Y2K6</id>
        <label>USP20</label>
    </interactant>
    <organismsDiffer>false</organismsDiffer>
    <experiments>3</experiments>
</comment>
<comment type="interaction">
    <interactant intactId="EBI-712648">
        <id>O95994</id>
    </interactant>
    <interactant intactId="EBI-11980193">
        <id>Q14119</id>
        <label>VEZF1</label>
    </interactant>
    <organismsDiffer>false</organismsDiffer>
    <experiments>5</experiments>
</comment>
<comment type="interaction">
    <interactant intactId="EBI-712648">
        <id>O95994</id>
    </interactant>
    <interactant intactId="EBI-12369705">
        <id>Q9Y6T4</id>
        <label>WUGSC:H_DJ0726N20.gs.b</label>
    </interactant>
    <organismsDiffer>false</organismsDiffer>
    <experiments>5</experiments>
</comment>
<comment type="interaction">
    <interactant intactId="EBI-712648">
        <id>O95994</id>
    </interactant>
    <interactant intactId="EBI-10254561">
        <id>Q6UX98</id>
        <label>ZDHHC24</label>
    </interactant>
    <organismsDiffer>false</organismsDiffer>
    <experiments>3</experiments>
</comment>
<comment type="interaction">
    <interactant intactId="EBI-712648">
        <id>O95994</id>
    </interactant>
    <interactant intactId="EBI-1052613">
        <id>Q96JP5</id>
        <label>ZFP91</label>
    </interactant>
    <organismsDiffer>false</organismsDiffer>
    <experiments>3</experiments>
</comment>
<comment type="interaction">
    <interactant intactId="EBI-712648">
        <id>O95994</id>
    </interactant>
    <interactant intactId="EBI-11741890">
        <id>Q86VK4-3</id>
        <label>ZNF410</label>
    </interactant>
    <organismsDiffer>false</organismsDiffer>
    <experiments>3</experiments>
</comment>
<comment type="subcellular location">
    <subcellularLocation>
        <location evidence="5">Secreted</location>
    </subcellularLocation>
    <subcellularLocation>
        <location evidence="2">Endoplasmic reticulum</location>
    </subcellularLocation>
</comment>
<comment type="tissue specificity">
    <text evidence="11">Expressed strongly in trachea, lung, stomach, colon, prostate and small intestine. Expressed weakly in pituitary gland, salivary gland, mammary gland, bladder, appendix, ovary, fetal lung, uterus, pancreas, kidney, fetal kidney, testis, placenta, thyroid gland and in estrogen receptor (ER)-positive breast cancer cell lines.</text>
</comment>
<comment type="disease" evidence="9 10">
    <disease id="DI-06600">
        <name>Respiratory infections, recurrent, and failure to thrive with or without diarrhea</name>
        <acronym>RIFTD</acronym>
        <description>An autosomal recessive disorder characterized by neonatal onset of recurrent pulmonary infections, coughing, wheezy episodes, interstitial lung disease, and bronchiectasis. Episodes of vomiting and chronic diarrhea result in failure to thrive. Results of sweat chloride and pancreatic elastase tests are normal.</description>
        <dbReference type="MIM" id="620233"/>
    </disease>
    <text>The disease is caused by variants affecting the gene represented in this entry.</text>
</comment>
<comment type="similarity">
    <text evidence="12">Belongs to the AGR family.</text>
</comment>
<reference key="1">
    <citation type="journal article" date="1998" name="Biochem. Biophys. Res. Commun.">
        <title>hAG-2, the human homologue of the Xenopus laevis cement gland gene XAG-2, is coexpressed with estrogen receptor in breast cancer cell lines.</title>
        <authorList>
            <person name="Thompson D.A."/>
            <person name="Weigel R.J."/>
        </authorList>
    </citation>
    <scope>NUCLEOTIDE SEQUENCE [MRNA]</scope>
    <scope>TISSUE SPECIFICITY</scope>
    <source>
        <tissue>Mammary gland</tissue>
    </source>
</reference>
<reference key="2">
    <citation type="submission" date="1998-12" db="EMBL/GenBank/DDBJ databases">
        <title>Identification of human homolog of XAG-2 over-expressed in tumors.</title>
        <authorList>
            <person name="Zhang J.S."/>
            <person name="Smith D.I."/>
        </authorList>
    </citation>
    <scope>NUCLEOTIDE SEQUENCE [MRNA]</scope>
    <source>
        <tissue>Prostatic carcinoma</tissue>
    </source>
</reference>
<reference key="3">
    <citation type="submission" date="2003-07" db="EMBL/GenBank/DDBJ databases">
        <title>Cloning and expression of a novel human cDNA homology to murine GOB-4 mRNA.</title>
        <authorList>
            <person name="Fan Y.X."/>
            <person name="Yu L."/>
            <person name="Zhang X.N."/>
            <person name="Wan W.C."/>
            <person name="Wang X.K."/>
            <person name="Zhao S.Y."/>
        </authorList>
    </citation>
    <scope>NUCLEOTIDE SEQUENCE [MRNA]</scope>
</reference>
<reference key="4">
    <citation type="journal article" date="2003" name="Genome Res.">
        <title>The secreted protein discovery initiative (SPDI), a large-scale effort to identify novel human secreted and transmembrane proteins: a bioinformatics assessment.</title>
        <authorList>
            <person name="Clark H.F."/>
            <person name="Gurney A.L."/>
            <person name="Abaya E."/>
            <person name="Baker K."/>
            <person name="Baldwin D.T."/>
            <person name="Brush J."/>
            <person name="Chen J."/>
            <person name="Chow B."/>
            <person name="Chui C."/>
            <person name="Crowley C."/>
            <person name="Currell B."/>
            <person name="Deuel B."/>
            <person name="Dowd P."/>
            <person name="Eaton D."/>
            <person name="Foster J.S."/>
            <person name="Grimaldi C."/>
            <person name="Gu Q."/>
            <person name="Hass P.E."/>
            <person name="Heldens S."/>
            <person name="Huang A."/>
            <person name="Kim H.S."/>
            <person name="Klimowski L."/>
            <person name="Jin Y."/>
            <person name="Johnson S."/>
            <person name="Lee J."/>
            <person name="Lewis L."/>
            <person name="Liao D."/>
            <person name="Mark M.R."/>
            <person name="Robbie E."/>
            <person name="Sanchez C."/>
            <person name="Schoenfeld J."/>
            <person name="Seshagiri S."/>
            <person name="Simmons L."/>
            <person name="Singh J."/>
            <person name="Smith V."/>
            <person name="Stinson J."/>
            <person name="Vagts A."/>
            <person name="Vandlen R.L."/>
            <person name="Watanabe C."/>
            <person name="Wieand D."/>
            <person name="Woods K."/>
            <person name="Xie M.-H."/>
            <person name="Yansura D.G."/>
            <person name="Yi S."/>
            <person name="Yu G."/>
            <person name="Yuan J."/>
            <person name="Zhang M."/>
            <person name="Zhang Z."/>
            <person name="Goddard A.D."/>
            <person name="Wood W.I."/>
            <person name="Godowski P.J."/>
            <person name="Gray A.M."/>
        </authorList>
    </citation>
    <scope>NUCLEOTIDE SEQUENCE [LARGE SCALE MRNA]</scope>
</reference>
<reference key="5">
    <citation type="submission" date="2003-05" db="EMBL/GenBank/DDBJ databases">
        <title>Cloning of human full-length CDSs in BD Creator(TM) system donor vector.</title>
        <authorList>
            <person name="Kalnine N."/>
            <person name="Chen X."/>
            <person name="Rolfs A."/>
            <person name="Halleck A."/>
            <person name="Hines L."/>
            <person name="Eisenstein S."/>
            <person name="Koundinya M."/>
            <person name="Raphael J."/>
            <person name="Moreira D."/>
            <person name="Kelley T."/>
            <person name="LaBaer J."/>
            <person name="Lin Y."/>
            <person name="Phelan M."/>
            <person name="Farmer A."/>
        </authorList>
    </citation>
    <scope>NUCLEOTIDE SEQUENCE [LARGE SCALE MRNA]</scope>
</reference>
<reference key="6">
    <citation type="journal article" date="2003" name="Nature">
        <title>The DNA sequence of human chromosome 7.</title>
        <authorList>
            <person name="Hillier L.W."/>
            <person name="Fulton R.S."/>
            <person name="Fulton L.A."/>
            <person name="Graves T.A."/>
            <person name="Pepin K.H."/>
            <person name="Wagner-McPherson C."/>
            <person name="Layman D."/>
            <person name="Maas J."/>
            <person name="Jaeger S."/>
            <person name="Walker R."/>
            <person name="Wylie K."/>
            <person name="Sekhon M."/>
            <person name="Becker M.C."/>
            <person name="O'Laughlin M.D."/>
            <person name="Schaller M.E."/>
            <person name="Fewell G.A."/>
            <person name="Delehaunty K.D."/>
            <person name="Miner T.L."/>
            <person name="Nash W.E."/>
            <person name="Cordes M."/>
            <person name="Du H."/>
            <person name="Sun H."/>
            <person name="Edwards J."/>
            <person name="Bradshaw-Cordum H."/>
            <person name="Ali J."/>
            <person name="Andrews S."/>
            <person name="Isak A."/>
            <person name="Vanbrunt A."/>
            <person name="Nguyen C."/>
            <person name="Du F."/>
            <person name="Lamar B."/>
            <person name="Courtney L."/>
            <person name="Kalicki J."/>
            <person name="Ozersky P."/>
            <person name="Bielicki L."/>
            <person name="Scott K."/>
            <person name="Holmes A."/>
            <person name="Harkins R."/>
            <person name="Harris A."/>
            <person name="Strong C.M."/>
            <person name="Hou S."/>
            <person name="Tomlinson C."/>
            <person name="Dauphin-Kohlberg S."/>
            <person name="Kozlowicz-Reilly A."/>
            <person name="Leonard S."/>
            <person name="Rohlfing T."/>
            <person name="Rock S.M."/>
            <person name="Tin-Wollam A.-M."/>
            <person name="Abbott A."/>
            <person name="Minx P."/>
            <person name="Maupin R."/>
            <person name="Strowmatt C."/>
            <person name="Latreille P."/>
            <person name="Miller N."/>
            <person name="Johnson D."/>
            <person name="Murray J."/>
            <person name="Woessner J.P."/>
            <person name="Wendl M.C."/>
            <person name="Yang S.-P."/>
            <person name="Schultz B.R."/>
            <person name="Wallis J.W."/>
            <person name="Spieth J."/>
            <person name="Bieri T.A."/>
            <person name="Nelson J.O."/>
            <person name="Berkowicz N."/>
            <person name="Wohldmann P.E."/>
            <person name="Cook L.L."/>
            <person name="Hickenbotham M.T."/>
            <person name="Eldred J."/>
            <person name="Williams D."/>
            <person name="Bedell J.A."/>
            <person name="Mardis E.R."/>
            <person name="Clifton S.W."/>
            <person name="Chissoe S.L."/>
            <person name="Marra M.A."/>
            <person name="Raymond C."/>
            <person name="Haugen E."/>
            <person name="Gillett W."/>
            <person name="Zhou Y."/>
            <person name="James R."/>
            <person name="Phelps K."/>
            <person name="Iadanoto S."/>
            <person name="Bubb K."/>
            <person name="Simms E."/>
            <person name="Levy R."/>
            <person name="Clendenning J."/>
            <person name="Kaul R."/>
            <person name="Kent W.J."/>
            <person name="Furey T.S."/>
            <person name="Baertsch R.A."/>
            <person name="Brent M.R."/>
            <person name="Keibler E."/>
            <person name="Flicek P."/>
            <person name="Bork P."/>
            <person name="Suyama M."/>
            <person name="Bailey J.A."/>
            <person name="Portnoy M.E."/>
            <person name="Torrents D."/>
            <person name="Chinwalla A.T."/>
            <person name="Gish W.R."/>
            <person name="Eddy S.R."/>
            <person name="McPherson J.D."/>
            <person name="Olson M.V."/>
            <person name="Eichler E.E."/>
            <person name="Green E.D."/>
            <person name="Waterston R.H."/>
            <person name="Wilson R.K."/>
        </authorList>
    </citation>
    <scope>NUCLEOTIDE SEQUENCE [LARGE SCALE GENOMIC DNA]</scope>
</reference>
<reference key="7">
    <citation type="journal article" date="2004" name="Genome Res.">
        <title>The status, quality, and expansion of the NIH full-length cDNA project: the Mammalian Gene Collection (MGC).</title>
        <authorList>
            <consortium name="The MGC Project Team"/>
        </authorList>
    </citation>
    <scope>NUCLEOTIDE SEQUENCE [LARGE SCALE MRNA]</scope>
    <source>
        <tissue>Colon</tissue>
    </source>
</reference>
<reference key="8">
    <citation type="journal article" date="2004" name="Protein Sci.">
        <title>Signal peptide prediction based on analysis of experimentally verified cleavage sites.</title>
        <authorList>
            <person name="Zhang Z."/>
            <person name="Henzel W.J."/>
        </authorList>
    </citation>
    <scope>PROTEIN SEQUENCE OF 21-35</scope>
</reference>
<reference key="9">
    <citation type="journal article" date="2003" name="Br. J. Cancer">
        <title>hAG-2 and hAG-3, human homologues of genes involved in differentiation, are associated with oestrogen receptor-positive breast tumours and interact with metastasis gene C4.4a and dystroglycan.</title>
        <authorList>
            <person name="Fletcher G.C."/>
            <person name="Patel S."/>
            <person name="Tyson K."/>
            <person name="Adam P.J."/>
            <person name="Schenker M."/>
            <person name="Loader J.A."/>
            <person name="Daviet L."/>
            <person name="Legrain P."/>
            <person name="Parekh R."/>
            <person name="Harris A.L."/>
            <person name="Terrett J.A."/>
        </authorList>
    </citation>
    <scope>INTERACTION WITH LYPD3 AND DAG1</scope>
</reference>
<reference key="10">
    <citation type="journal article" date="2005" name="Genes Chromosomes Cancer">
        <title>AGR2, an androgen-inducible secretory protein overexpressed in prostate cancer.</title>
        <authorList>
            <person name="Zhang J.-S."/>
            <person name="Gong A."/>
            <person name="Cheville J.C."/>
            <person name="Smith D.I."/>
            <person name="Young C.Y.F."/>
        </authorList>
    </citation>
    <scope>SUBCELLULAR LOCATION</scope>
</reference>
<reference key="11">
    <citation type="journal article" date="2008" name="Cancer Res.">
        <title>The adenocarcinoma-associated antigen, AGR2, promotes tumor growth, cell migration, and cellular transformation.</title>
        <authorList>
            <person name="Wang Z."/>
            <person name="Hao Y."/>
            <person name="Lowe A.W."/>
        </authorList>
    </citation>
    <scope>FUNCTION</scope>
</reference>
<reference key="12">
    <citation type="journal article" date="2009" name="Proc. Natl. Acad. Sci. U.S.A.">
        <title>The protein disulfide isomerase AGR2 is essential for production of intestinal mucus.</title>
        <authorList>
            <person name="Park S.-W."/>
            <person name="Zhen G."/>
            <person name="Verhaeghe C."/>
            <person name="Nakagami Y."/>
            <person name="Nguyenvu L.T."/>
            <person name="Barczak A.J."/>
            <person name="Killeen N."/>
            <person name="Erle D.J."/>
        </authorList>
    </citation>
    <scope>INTERACTION WITH MUC2</scope>
    <scope>MUTAGENESIS OF CYS-81</scope>
</reference>
<reference key="13">
    <citation type="journal article" date="2013" name="J. Mol. Biol.">
        <title>Metastasis-promoting anterior gradient 2 protein has a dimeric thioredoxin fold structure and a role in cell adhesion.</title>
        <authorList>
            <person name="Patel P."/>
            <person name="Clarke C."/>
            <person name="Barraclough D.L."/>
            <person name="Jowitt T.A."/>
            <person name="Rudland P.S."/>
            <person name="Barraclough R."/>
            <person name="Lian L.Y."/>
        </authorList>
    </citation>
    <scope>STRUCTURE BY NMR OF 41-175</scope>
    <scope>FUNCTION</scope>
    <scope>SUBUNIT</scope>
    <scope>HOMODIMERIZATION</scope>
    <scope>MUTAGENESIS OF GLU-60; TYR-63 AND LYS-64</scope>
    <scope>CELL ADHESION REGION</scope>
</reference>
<reference key="14">
    <citation type="journal article" date="2022" name="J. Med. Genet.">
        <title>A disorder clinically resembling cystic fibrosis caused by biallelic variants in the AGR2 gene.</title>
        <authorList>
            <person name="Bertoli-Avella A."/>
            <person name="Hotakainen R."/>
            <person name="Al Shehhi M."/>
            <person name="Urzi A."/>
            <person name="Pareira C."/>
            <person name="Marais A."/>
            <person name="Al Shidhani K."/>
            <person name="Aloraimi S."/>
            <person name="Morales-Torres G."/>
            <person name="Fisher S."/>
            <person name="Demuth L."/>
            <person name="Moteleb Selim L.A."/>
            <person name="Al Menabawy N."/>
            <person name="Busehail M."/>
            <person name="AlShaikh M."/>
            <person name="Gilani N."/>
            <person name="Chalabi D.N."/>
            <person name="Alharbi N.S."/>
            <person name="Alfadhel M."/>
            <person name="Abdelrahman M."/>
            <person name="Venselaar H."/>
            <person name="Anjum N."/>
            <person name="Saeed A."/>
            <person name="Alghamdi M.A."/>
            <person name="Aljaedi H."/>
            <person name="Arabi H."/>
            <person name="Karageorgou V."/>
            <person name="Khan S."/>
            <person name="Hajjari Z."/>
            <person name="Radefeldt M."/>
            <person name="Al-Ali R."/>
            <person name="Tripolszki K."/>
            <person name="Jamhawi A."/>
            <person name="Paknia O."/>
            <person name="Cozma C."/>
            <person name="Cheema H."/>
            <person name="Ameziane N."/>
            <person name="Al-Muhsen S."/>
            <person name="Bauer P."/>
        </authorList>
    </citation>
    <scope>VARIANTS RIFTD THR-71; TYR-117 AND GLU-143</scope>
    <scope>INVOLVEMENT IN RIFTD</scope>
</reference>
<reference key="15">
    <citation type="journal article" date="2021" name="Cell. Mol. Gastroenterol. Hepatol.">
        <title>Human AGR2 Deficiency Causes Mucus Barrier Dysfunction and Infantile Inflammatory Bowel Disease.</title>
        <authorList>
            <consortium name="COLORS in IBD-Qatar Study Group"/>
            <person name="Al-Shaibi A.A."/>
            <person name="Abdel-Motal U.M."/>
            <person name="Hubrack S.Z."/>
            <person name="Bullock A.N."/>
            <person name="Al-Marri A.A."/>
            <person name="Agrebi N."/>
            <person name="Al-Subaiey A.A."/>
            <person name="Ibrahim N.A."/>
            <person name="Charles A.K."/>
            <person name="Elawad M."/>
            <person name="Uhlig H.H."/>
            <person name="Lo B."/>
        </authorList>
    </citation>
    <scope>VARIANT RIFTD TYR-117</scope>
    <scope>CHARACTERIZATION OF VARIANT RIFTD TYR-117</scope>
    <scope>INTERACTION WITH MUC2</scope>
</reference>
<organism>
    <name type="scientific">Homo sapiens</name>
    <name type="common">Human</name>
    <dbReference type="NCBI Taxonomy" id="9606"/>
    <lineage>
        <taxon>Eukaryota</taxon>
        <taxon>Metazoa</taxon>
        <taxon>Chordata</taxon>
        <taxon>Craniata</taxon>
        <taxon>Vertebrata</taxon>
        <taxon>Euteleostomi</taxon>
        <taxon>Mammalia</taxon>
        <taxon>Eutheria</taxon>
        <taxon>Euarchontoglires</taxon>
        <taxon>Primates</taxon>
        <taxon>Haplorrhini</taxon>
        <taxon>Catarrhini</taxon>
        <taxon>Hominidae</taxon>
        <taxon>Homo</taxon>
    </lineage>
</organism>
<protein>
    <recommendedName>
        <fullName>Anterior gradient protein 2 homolog</fullName>
        <shortName>AG-2</shortName>
        <shortName>hAG-2</shortName>
    </recommendedName>
    <alternativeName>
        <fullName>HPC8</fullName>
    </alternativeName>
    <alternativeName>
        <fullName>Secreted cement gland protein XAG-2 homolog</fullName>
    </alternativeName>
</protein>
<accession>O95994</accession>
<gene>
    <name type="primary">AGR2</name>
    <name type="synonym">AG2</name>
    <name type="ORF">UNQ515/PRO1030</name>
</gene>
<dbReference type="EMBL" id="AF007791">
    <property type="protein sequence ID" value="AAC77358.1"/>
    <property type="molecule type" value="mRNA"/>
</dbReference>
<dbReference type="EMBL" id="AF038451">
    <property type="protein sequence ID" value="AAC82614.1"/>
    <property type="molecule type" value="mRNA"/>
</dbReference>
<dbReference type="EMBL" id="AF088867">
    <property type="protein sequence ID" value="AAF22484.1"/>
    <property type="molecule type" value="mRNA"/>
</dbReference>
<dbReference type="EMBL" id="AF115926">
    <property type="protein sequence ID" value="AAL54870.1"/>
    <property type="molecule type" value="mRNA"/>
</dbReference>
<dbReference type="EMBL" id="AF087879">
    <property type="protein sequence ID" value="AAP97179.1"/>
    <property type="molecule type" value="mRNA"/>
</dbReference>
<dbReference type="EMBL" id="AY359009">
    <property type="protein sequence ID" value="AAQ89368.1"/>
    <property type="molecule type" value="mRNA"/>
</dbReference>
<dbReference type="EMBL" id="BT007048">
    <property type="protein sequence ID" value="AAP35697.1"/>
    <property type="molecule type" value="mRNA"/>
</dbReference>
<dbReference type="EMBL" id="AC073333">
    <property type="protein sequence ID" value="AAP22354.1"/>
    <property type="molecule type" value="Genomic_DNA"/>
</dbReference>
<dbReference type="EMBL" id="BC015503">
    <property type="protein sequence ID" value="AAH15503.1"/>
    <property type="molecule type" value="mRNA"/>
</dbReference>
<dbReference type="CCDS" id="CCDS5364.1"/>
<dbReference type="PIR" id="JE0350">
    <property type="entry name" value="JE0350"/>
</dbReference>
<dbReference type="RefSeq" id="NP_006399.1">
    <property type="nucleotide sequence ID" value="NM_006408.4"/>
</dbReference>
<dbReference type="RefSeq" id="XP_005249638.1">
    <property type="nucleotide sequence ID" value="XM_005249581.5"/>
</dbReference>
<dbReference type="RefSeq" id="XP_054213068.1">
    <property type="nucleotide sequence ID" value="XM_054357093.1"/>
</dbReference>
<dbReference type="PDB" id="2LNS">
    <property type="method" value="NMR"/>
    <property type="chains" value="A/B=41-175"/>
</dbReference>
<dbReference type="PDB" id="2LNT">
    <property type="method" value="NMR"/>
    <property type="chains" value="A=41-175"/>
</dbReference>
<dbReference type="PDBsum" id="2LNS"/>
<dbReference type="PDBsum" id="2LNT"/>
<dbReference type="BMRB" id="O95994"/>
<dbReference type="SMR" id="O95994"/>
<dbReference type="BioGRID" id="115802">
    <property type="interactions" value="946"/>
</dbReference>
<dbReference type="DIP" id="DIP-48825N"/>
<dbReference type="FunCoup" id="O95994">
    <property type="interactions" value="439"/>
</dbReference>
<dbReference type="IntAct" id="O95994">
    <property type="interactions" value="105"/>
</dbReference>
<dbReference type="MINT" id="O95994"/>
<dbReference type="STRING" id="9606.ENSP00000391490"/>
<dbReference type="iPTMnet" id="O95994"/>
<dbReference type="PhosphoSitePlus" id="O95994"/>
<dbReference type="SwissPalm" id="O95994"/>
<dbReference type="BioMuta" id="AGR2"/>
<dbReference type="CPTAC" id="CPTAC-1293"/>
<dbReference type="CPTAC" id="CPTAC-456"/>
<dbReference type="jPOST" id="O95994"/>
<dbReference type="MassIVE" id="O95994"/>
<dbReference type="PaxDb" id="9606-ENSP00000391490"/>
<dbReference type="PeptideAtlas" id="O95994"/>
<dbReference type="ProteomicsDB" id="51169"/>
<dbReference type="Pumba" id="O95994"/>
<dbReference type="TopDownProteomics" id="O95994"/>
<dbReference type="Antibodypedia" id="1524">
    <property type="antibodies" value="929 antibodies from 41 providers"/>
</dbReference>
<dbReference type="DNASU" id="10551"/>
<dbReference type="Ensembl" id="ENST00000419304.7">
    <property type="protein sequence ID" value="ENSP00000391490.2"/>
    <property type="gene ID" value="ENSG00000106541.12"/>
</dbReference>
<dbReference type="GeneID" id="10551"/>
<dbReference type="KEGG" id="hsa:10551"/>
<dbReference type="MANE-Select" id="ENST00000419304.7">
    <property type="protein sequence ID" value="ENSP00000391490.2"/>
    <property type="RefSeq nucleotide sequence ID" value="NM_006408.4"/>
    <property type="RefSeq protein sequence ID" value="NP_006399.1"/>
</dbReference>
<dbReference type="AGR" id="HGNC:328"/>
<dbReference type="CTD" id="10551"/>
<dbReference type="DisGeNET" id="10551"/>
<dbReference type="GeneCards" id="AGR2"/>
<dbReference type="HGNC" id="HGNC:328">
    <property type="gene designation" value="AGR2"/>
</dbReference>
<dbReference type="HPA" id="ENSG00000106541">
    <property type="expression patterns" value="Tissue enhanced (cervix, intestine, stomach)"/>
</dbReference>
<dbReference type="MalaCards" id="AGR2"/>
<dbReference type="MIM" id="606358">
    <property type="type" value="gene"/>
</dbReference>
<dbReference type="MIM" id="620233">
    <property type="type" value="phenotype"/>
</dbReference>
<dbReference type="neXtProt" id="NX_O95994"/>
<dbReference type="OpenTargets" id="ENSG00000106541"/>
<dbReference type="PharmGKB" id="PA24625"/>
<dbReference type="VEuPathDB" id="HostDB:ENSG00000106541"/>
<dbReference type="eggNOG" id="ENOG502RYQ8">
    <property type="taxonomic scope" value="Eukaryota"/>
</dbReference>
<dbReference type="GeneTree" id="ENSGT00530000063273"/>
<dbReference type="HOGENOM" id="CLU_088048_1_1_1"/>
<dbReference type="InParanoid" id="O95994"/>
<dbReference type="OMA" id="YSNMQKA"/>
<dbReference type="OrthoDB" id="262308at2759"/>
<dbReference type="PAN-GO" id="O95994">
    <property type="GO annotations" value="3 GO annotations based on evolutionary models"/>
</dbReference>
<dbReference type="PhylomeDB" id="O95994"/>
<dbReference type="TreeFam" id="TF321449"/>
<dbReference type="PathwayCommons" id="O95994"/>
<dbReference type="SignaLink" id="O95994"/>
<dbReference type="BioGRID-ORCS" id="10551">
    <property type="hits" value="25 hits in 1150 CRISPR screens"/>
</dbReference>
<dbReference type="ChiTaRS" id="AGR2">
    <property type="organism name" value="human"/>
</dbReference>
<dbReference type="EvolutionaryTrace" id="O95994"/>
<dbReference type="GeneWiki" id="AGR2"/>
<dbReference type="GenomeRNAi" id="10551"/>
<dbReference type="Pharos" id="O95994">
    <property type="development level" value="Tbio"/>
</dbReference>
<dbReference type="PRO" id="PR:O95994"/>
<dbReference type="Proteomes" id="UP000005640">
    <property type="component" value="Chromosome 7"/>
</dbReference>
<dbReference type="RNAct" id="O95994">
    <property type="molecule type" value="protein"/>
</dbReference>
<dbReference type="Bgee" id="ENSG00000106541">
    <property type="expression patterns" value="Expressed in mucosa of sigmoid colon and 144 other cell types or tissues"/>
</dbReference>
<dbReference type="ExpressionAtlas" id="O95994">
    <property type="expression patterns" value="baseline and differential"/>
</dbReference>
<dbReference type="GO" id="GO:0005783">
    <property type="term" value="C:endoplasmic reticulum"/>
    <property type="evidence" value="ECO:0000315"/>
    <property type="project" value="UniProtKB"/>
</dbReference>
<dbReference type="GO" id="GO:0005576">
    <property type="term" value="C:extracellular region"/>
    <property type="evidence" value="ECO:0000314"/>
    <property type="project" value="UniProtKB"/>
</dbReference>
<dbReference type="GO" id="GO:0005615">
    <property type="term" value="C:extracellular space"/>
    <property type="evidence" value="ECO:0000314"/>
    <property type="project" value="UniProtKB"/>
</dbReference>
<dbReference type="GO" id="GO:0002162">
    <property type="term" value="F:dystroglycan binding"/>
    <property type="evidence" value="ECO:0000314"/>
    <property type="project" value="UniProtKB"/>
</dbReference>
<dbReference type="GO" id="GO:0005154">
    <property type="term" value="F:epidermal growth factor receptor binding"/>
    <property type="evidence" value="ECO:0000353"/>
    <property type="project" value="UniProtKB"/>
</dbReference>
<dbReference type="GO" id="GO:0042802">
    <property type="term" value="F:identical protein binding"/>
    <property type="evidence" value="ECO:0000353"/>
    <property type="project" value="UniProtKB"/>
</dbReference>
<dbReference type="GO" id="GO:0048546">
    <property type="term" value="P:digestive tract morphogenesis"/>
    <property type="evidence" value="ECO:0000250"/>
    <property type="project" value="UniProtKB"/>
</dbReference>
<dbReference type="GO" id="GO:0006954">
    <property type="term" value="P:inflammatory response"/>
    <property type="evidence" value="ECO:0007669"/>
    <property type="project" value="Ensembl"/>
</dbReference>
<dbReference type="GO" id="GO:0060480">
    <property type="term" value="P:lung goblet cell differentiation"/>
    <property type="evidence" value="ECO:0007669"/>
    <property type="project" value="Ensembl"/>
</dbReference>
<dbReference type="GO" id="GO:0070254">
    <property type="term" value="P:mucus secretion"/>
    <property type="evidence" value="ECO:0000250"/>
    <property type="project" value="UniProtKB"/>
</dbReference>
<dbReference type="GO" id="GO:0010811">
    <property type="term" value="P:positive regulation of cell-substrate adhesion"/>
    <property type="evidence" value="ECO:0000315"/>
    <property type="project" value="UniProtKB"/>
</dbReference>
<dbReference type="GO" id="GO:0048639">
    <property type="term" value="P:positive regulation of developmental growth"/>
    <property type="evidence" value="ECO:0000250"/>
    <property type="project" value="UniProtKB"/>
</dbReference>
<dbReference type="GO" id="GO:0045742">
    <property type="term" value="P:positive regulation of epidermal growth factor receptor signaling pathway"/>
    <property type="evidence" value="ECO:0000315"/>
    <property type="project" value="UniProtKB"/>
</dbReference>
<dbReference type="GO" id="GO:0010628">
    <property type="term" value="P:positive regulation of gene expression"/>
    <property type="evidence" value="ECO:0000315"/>
    <property type="project" value="UniProtKB"/>
</dbReference>
<dbReference type="GO" id="GO:1903896">
    <property type="term" value="P:positive regulation of IRE1-mediated unfolded protein response"/>
    <property type="evidence" value="ECO:0000314"/>
    <property type="project" value="UniProtKB"/>
</dbReference>
<dbReference type="GO" id="GO:1903899">
    <property type="term" value="P:positive regulation of PERK-mediated unfolded protein response"/>
    <property type="evidence" value="ECO:0000314"/>
    <property type="project" value="UniProtKB"/>
</dbReference>
<dbReference type="GO" id="GO:1903078">
    <property type="term" value="P:positive regulation of protein localization to plasma membrane"/>
    <property type="evidence" value="ECO:0000315"/>
    <property type="project" value="UniProtKB"/>
</dbReference>
<dbReference type="CDD" id="cd02960">
    <property type="entry name" value="AGR"/>
    <property type="match status" value="1"/>
</dbReference>
<dbReference type="FunFam" id="3.40.30.10:FF:000036">
    <property type="entry name" value="anterior gradient protein 2 homolog"/>
    <property type="match status" value="1"/>
</dbReference>
<dbReference type="Gene3D" id="3.40.30.10">
    <property type="entry name" value="Glutaredoxin"/>
    <property type="match status" value="1"/>
</dbReference>
<dbReference type="InterPro" id="IPR051099">
    <property type="entry name" value="AGR/TXD"/>
</dbReference>
<dbReference type="InterPro" id="IPR036249">
    <property type="entry name" value="Thioredoxin-like_sf"/>
</dbReference>
<dbReference type="PANTHER" id="PTHR15337:SF1">
    <property type="entry name" value="ANTERIOR GRADIENT PROTEIN 2 HOMOLOG"/>
    <property type="match status" value="1"/>
</dbReference>
<dbReference type="PANTHER" id="PTHR15337">
    <property type="entry name" value="ANTERIOR GRADIENT PROTEIN-RELATED"/>
    <property type="match status" value="1"/>
</dbReference>
<dbReference type="Pfam" id="PF13899">
    <property type="entry name" value="Thioredoxin_7"/>
    <property type="match status" value="1"/>
</dbReference>
<dbReference type="SUPFAM" id="SSF52833">
    <property type="entry name" value="Thioredoxin-like"/>
    <property type="match status" value="1"/>
</dbReference>
<sequence>MEKIPVSAFLLLVALSYTLARDTTVKPGAKKDTKDSRPKLPQTLSRGWGDQLIWTQTYEEALYKSKTSNKPLMIIHHLDECPHSQALKKVFAENKEIQKLAEQFVLLNLVYETTDKHLSPDGQYVPRIMFVDPSLTVRADITGRYSNRLYAYEPADTALLLDNMKKALKLLKTEL</sequence>
<keyword id="KW-0002">3D-structure</keyword>
<keyword id="KW-0903">Direct protein sequencing</keyword>
<keyword id="KW-0225">Disease variant</keyword>
<keyword id="KW-1015">Disulfide bond</keyword>
<keyword id="KW-0256">Endoplasmic reticulum</keyword>
<keyword id="KW-1267">Proteomics identification</keyword>
<keyword id="KW-0656">Proto-oncogene</keyword>
<keyword id="KW-1185">Reference proteome</keyword>
<keyword id="KW-0964">Secreted</keyword>
<keyword id="KW-0732">Signal</keyword>